<organismHost>
    <name type="scientific">Aves</name>
    <dbReference type="NCBI Taxonomy" id="8782"/>
</organismHost>
<organismHost>
    <name type="scientific">Homo sapiens</name>
    <name type="common">Human</name>
    <dbReference type="NCBI Taxonomy" id="9606"/>
</organismHost>
<name>PAX_I57A1</name>
<dbReference type="EMBL" id="M81573">
    <property type="status" value="NOT_ANNOTATED_CDS"/>
    <property type="molecule type" value="Unassigned_RNA"/>
</dbReference>
<dbReference type="SMR" id="P0DJS5"/>
<dbReference type="GO" id="GO:0003723">
    <property type="term" value="F:RNA binding"/>
    <property type="evidence" value="ECO:0007669"/>
    <property type="project" value="InterPro"/>
</dbReference>
<dbReference type="GO" id="GO:0039694">
    <property type="term" value="P:viral RNA genome replication"/>
    <property type="evidence" value="ECO:0007669"/>
    <property type="project" value="InterPro"/>
</dbReference>
<dbReference type="GO" id="GO:0075523">
    <property type="term" value="P:viral translational frameshifting"/>
    <property type="evidence" value="ECO:0007669"/>
    <property type="project" value="UniProtKB-KW"/>
</dbReference>
<dbReference type="FunFam" id="3.40.91.90:FF:000001">
    <property type="entry name" value="Polymerase acidic protein"/>
    <property type="match status" value="1"/>
</dbReference>
<dbReference type="Gene3D" id="3.40.91.90">
    <property type="entry name" value="Influenza RNA-dependent RNA polymerase subunit PA, endonuclease domain"/>
    <property type="match status" value="1"/>
</dbReference>
<dbReference type="InterPro" id="IPR001009">
    <property type="entry name" value="PA/PA-X"/>
</dbReference>
<dbReference type="InterPro" id="IPR038372">
    <property type="entry name" value="PA/PA-X_sf"/>
</dbReference>
<dbReference type="Pfam" id="PF00603">
    <property type="entry name" value="Flu_PA"/>
    <property type="match status" value="1"/>
</dbReference>
<accession>P0DJS5</accession>
<proteinExistence type="inferred from homology"/>
<evidence type="ECO:0000250" key="1">
    <source>
        <dbReference type="UniProtKB" id="P0CK64"/>
    </source>
</evidence>
<evidence type="ECO:0000250" key="2">
    <source>
        <dbReference type="UniProtKB" id="P0CK68"/>
    </source>
</evidence>
<evidence type="ECO:0000250" key="3">
    <source>
        <dbReference type="UniProtKB" id="P0DJW8"/>
    </source>
</evidence>
<evidence type="ECO:0000250" key="4">
    <source>
        <dbReference type="UniProtKB" id="P0DXO5"/>
    </source>
</evidence>
<evidence type="ECO:0000250" key="5">
    <source>
        <dbReference type="UniProtKB" id="P0DXO6"/>
    </source>
</evidence>
<evidence type="ECO:0000305" key="6"/>
<reference key="1">
    <citation type="journal article" date="1992" name="Virology">
        <title>Sequence changes in the live attenuated, cold-adapted variants of influenza A/Leningrad/134/57 (H2N2) virus.</title>
        <authorList>
            <person name="Klimov A.I."/>
            <person name="Cox N.J."/>
            <person name="Yotov W.V."/>
            <person name="Rocha E."/>
            <person name="Alexandrova G.I."/>
            <person name="Kendal A.P."/>
        </authorList>
    </citation>
    <scope>NUCLEOTIDE SEQUENCE</scope>
</reference>
<gene>
    <name type="primary">PA</name>
</gene>
<organism>
    <name type="scientific">Influenza A virus (strain A/Leningrad/134/1957 H2N2)</name>
    <dbReference type="NCBI Taxonomy" id="387163"/>
    <lineage>
        <taxon>Viruses</taxon>
        <taxon>Riboviria</taxon>
        <taxon>Orthornavirae</taxon>
        <taxon>Negarnaviricota</taxon>
        <taxon>Polyploviricotina</taxon>
        <taxon>Insthoviricetes</taxon>
        <taxon>Articulavirales</taxon>
        <taxon>Orthomyxoviridae</taxon>
        <taxon>Alphainfluenzavirus</taxon>
        <taxon>Alphainfluenzavirus influenzae</taxon>
        <taxon>Influenza A virus</taxon>
    </lineage>
</organism>
<protein>
    <recommendedName>
        <fullName>Protein PA-X</fullName>
    </recommendedName>
</protein>
<feature type="chain" id="PRO_0000419388" description="Protein PA-X">
    <location>
        <begin position="1"/>
        <end position="252"/>
    </location>
</feature>
<feature type="active site" evidence="2">
    <location>
        <position position="80"/>
    </location>
</feature>
<feature type="active site" evidence="2">
    <location>
        <position position="108"/>
    </location>
</feature>
<feature type="site" description="Important for efficient shutoff activity" evidence="5">
    <location>
        <position position="28"/>
    </location>
</feature>
<feature type="site" description="Important for efficient shutoff activity" evidence="5">
    <location>
        <position position="65"/>
    </location>
</feature>
<feature type="site" description="Important for efficient shutoff activity and nuclear localization" evidence="4">
    <location>
        <position position="195"/>
    </location>
</feature>
<feature type="site" description="Important for efficient shutoff activity and nuclear localization" evidence="4">
    <location>
        <position position="198"/>
    </location>
</feature>
<feature type="site" description="Important for efficient shutoff activity and nuclear localization" evidence="4">
    <location>
        <position position="199"/>
    </location>
</feature>
<feature type="site" description="Important for efficient shutoff activity" evidence="3">
    <location>
        <position position="202"/>
    </location>
</feature>
<feature type="site" description="Important for efficient shutoff activity" evidence="3">
    <location>
        <position position="203"/>
    </location>
</feature>
<feature type="site" description="Important for efficient shutoff activity" evidence="3">
    <location>
        <position position="206"/>
    </location>
</feature>
<keyword id="KW-1132">Decay of host mRNAs by virus</keyword>
<keyword id="KW-1262">Eukaryotic host gene expression shutoff by virus</keyword>
<keyword id="KW-1035">Host cytoplasm</keyword>
<keyword id="KW-1190">Host gene expression shutoff by virus</keyword>
<keyword id="KW-1192">Host mRNA suppression by virus</keyword>
<keyword id="KW-1048">Host nucleus</keyword>
<keyword id="KW-0945">Host-virus interaction</keyword>
<keyword id="KW-0688">Ribosomal frameshifting</keyword>
<comment type="function">
    <text evidence="1 4">Plays a major role in the shutoff of the host protein expression by cleaving mRNAs probably via an endonuclease activity. This host shutoff allows the virus to escape from the host antiviral response (By similarity). Hijacks host RNA splicing machinery to selectively target host RNAs containing introns for destruction. This may explain the preferential degradation of RNAs that have undergone co- or post-transcriptional processing (By similarity).</text>
</comment>
<comment type="subcellular location">
    <subcellularLocation>
        <location evidence="4">Host cytoplasm</location>
    </subcellularLocation>
    <subcellularLocation>
        <location evidence="4">Host nucleus</location>
    </subcellularLocation>
</comment>
<comment type="alternative products">
    <event type="ribosomal frameshifting"/>
    <isoform>
        <id>P0DJS5-1</id>
        <name>PA-X</name>
        <sequence type="displayed"/>
    </isoform>
    <isoform>
        <id>P26122-1</id>
        <name>PA</name>
        <sequence type="external"/>
    </isoform>
</comment>
<comment type="domain">
    <text evidence="1 4">The probable endonuclease active site in the N-terminus and the basic amino acid cluster in the C-terminus are important for the shutoff activity. The C-terminus acts as a nuclear localization signal (By similarity). The C-terminus is recruited to host protein complexes involved in nuclear Pol II RNA processing (By similarity).</text>
</comment>
<comment type="similarity">
    <text evidence="6">Belongs to the influenza viruses PA-X family.</text>
</comment>
<sequence length="252" mass="29294">MEEFVRQCFNPMIVELAEKAMKEYGEDLKIETNKFAAICTHLEVCFMYSDFHFINEQGESIIVELDDPNALLKHRFEIIEGRDRTMAWTVVNSICNTTGAEKPKFLPDLYDYKENRFIEIGVTRREVHIYYLEKANKIKSEKTHIHIFSFTGEEMATKADYTLDEESRARIKTRLFTIRQEMASRGLWDSFVSPKEAKKQLKKDLKSQGQCAGSPTKVSRRTSPALRILEPMWMDSNPTATLRASFLKCPKK</sequence>